<name>COAE_MOOTA</name>
<accession>Q2RHF1</accession>
<protein>
    <recommendedName>
        <fullName evidence="1">Dephospho-CoA kinase</fullName>
        <ecNumber evidence="1">2.7.1.24</ecNumber>
    </recommendedName>
    <alternativeName>
        <fullName evidence="1">Dephosphocoenzyme A kinase</fullName>
    </alternativeName>
</protein>
<gene>
    <name evidence="1" type="primary">coaE</name>
    <name type="ordered locus">Moth_1838</name>
</gene>
<dbReference type="EC" id="2.7.1.24" evidence="1"/>
<dbReference type="EMBL" id="CP000232">
    <property type="protein sequence ID" value="ABC20138.1"/>
    <property type="molecule type" value="Genomic_DNA"/>
</dbReference>
<dbReference type="RefSeq" id="YP_430681.1">
    <property type="nucleotide sequence ID" value="NC_007644.1"/>
</dbReference>
<dbReference type="SMR" id="Q2RHF1"/>
<dbReference type="STRING" id="264732.Moth_1838"/>
<dbReference type="EnsemblBacteria" id="ABC20138">
    <property type="protein sequence ID" value="ABC20138"/>
    <property type="gene ID" value="Moth_1838"/>
</dbReference>
<dbReference type="KEGG" id="mta:Moth_1838"/>
<dbReference type="PATRIC" id="fig|264732.11.peg.1990"/>
<dbReference type="eggNOG" id="COG0237">
    <property type="taxonomic scope" value="Bacteria"/>
</dbReference>
<dbReference type="HOGENOM" id="CLU_057180_1_2_9"/>
<dbReference type="OrthoDB" id="9812943at2"/>
<dbReference type="UniPathway" id="UPA00241">
    <property type="reaction ID" value="UER00356"/>
</dbReference>
<dbReference type="GO" id="GO:0005737">
    <property type="term" value="C:cytoplasm"/>
    <property type="evidence" value="ECO:0007669"/>
    <property type="project" value="UniProtKB-SubCell"/>
</dbReference>
<dbReference type="GO" id="GO:0005524">
    <property type="term" value="F:ATP binding"/>
    <property type="evidence" value="ECO:0007669"/>
    <property type="project" value="UniProtKB-UniRule"/>
</dbReference>
<dbReference type="GO" id="GO:0004140">
    <property type="term" value="F:dephospho-CoA kinase activity"/>
    <property type="evidence" value="ECO:0007669"/>
    <property type="project" value="UniProtKB-UniRule"/>
</dbReference>
<dbReference type="GO" id="GO:0015937">
    <property type="term" value="P:coenzyme A biosynthetic process"/>
    <property type="evidence" value="ECO:0007669"/>
    <property type="project" value="UniProtKB-UniRule"/>
</dbReference>
<dbReference type="CDD" id="cd02022">
    <property type="entry name" value="DPCK"/>
    <property type="match status" value="1"/>
</dbReference>
<dbReference type="FunFam" id="3.40.50.300:FF:000991">
    <property type="entry name" value="Dephospho-CoA kinase"/>
    <property type="match status" value="1"/>
</dbReference>
<dbReference type="Gene3D" id="3.40.50.300">
    <property type="entry name" value="P-loop containing nucleotide triphosphate hydrolases"/>
    <property type="match status" value="1"/>
</dbReference>
<dbReference type="HAMAP" id="MF_00376">
    <property type="entry name" value="Dephospho_CoA_kinase"/>
    <property type="match status" value="1"/>
</dbReference>
<dbReference type="InterPro" id="IPR001977">
    <property type="entry name" value="Depp_CoAkinase"/>
</dbReference>
<dbReference type="InterPro" id="IPR027417">
    <property type="entry name" value="P-loop_NTPase"/>
</dbReference>
<dbReference type="NCBIfam" id="TIGR00152">
    <property type="entry name" value="dephospho-CoA kinase"/>
    <property type="match status" value="1"/>
</dbReference>
<dbReference type="PANTHER" id="PTHR10695:SF46">
    <property type="entry name" value="BIFUNCTIONAL COENZYME A SYNTHASE-RELATED"/>
    <property type="match status" value="1"/>
</dbReference>
<dbReference type="PANTHER" id="PTHR10695">
    <property type="entry name" value="DEPHOSPHO-COA KINASE-RELATED"/>
    <property type="match status" value="1"/>
</dbReference>
<dbReference type="Pfam" id="PF01121">
    <property type="entry name" value="CoaE"/>
    <property type="match status" value="1"/>
</dbReference>
<dbReference type="SUPFAM" id="SSF52540">
    <property type="entry name" value="P-loop containing nucleoside triphosphate hydrolases"/>
    <property type="match status" value="1"/>
</dbReference>
<dbReference type="PROSITE" id="PS51219">
    <property type="entry name" value="DPCK"/>
    <property type="match status" value="1"/>
</dbReference>
<organism>
    <name type="scientific">Moorella thermoacetica (strain ATCC 39073 / JCM 9320)</name>
    <dbReference type="NCBI Taxonomy" id="264732"/>
    <lineage>
        <taxon>Bacteria</taxon>
        <taxon>Bacillati</taxon>
        <taxon>Bacillota</taxon>
        <taxon>Clostridia</taxon>
        <taxon>Moorellales</taxon>
        <taxon>Moorellaceae</taxon>
        <taxon>Moorella</taxon>
    </lineage>
</organism>
<evidence type="ECO:0000255" key="1">
    <source>
        <dbReference type="HAMAP-Rule" id="MF_00376"/>
    </source>
</evidence>
<proteinExistence type="inferred from homology"/>
<keyword id="KW-0067">ATP-binding</keyword>
<keyword id="KW-0173">Coenzyme A biosynthesis</keyword>
<keyword id="KW-0963">Cytoplasm</keyword>
<keyword id="KW-0418">Kinase</keyword>
<keyword id="KW-0547">Nucleotide-binding</keyword>
<keyword id="KW-0808">Transferase</keyword>
<feature type="chain" id="PRO_0000243306" description="Dephospho-CoA kinase">
    <location>
        <begin position="1"/>
        <end position="212"/>
    </location>
</feature>
<feature type="domain" description="DPCK" evidence="1">
    <location>
        <begin position="3"/>
        <end position="207"/>
    </location>
</feature>
<feature type="binding site" evidence="1">
    <location>
        <begin position="11"/>
        <end position="16"/>
    </location>
    <ligand>
        <name>ATP</name>
        <dbReference type="ChEBI" id="CHEBI:30616"/>
    </ligand>
</feature>
<sequence>MFIIGLTGGIASGKSTVAGILKDLGAIIIDTDRVAREVVAPGRPAYREIVAAFGPRVLRPDGQLDRPALARIIFNDATARELLNAITHPRIRELVQKRLEDLRRANPEAIVVIEAPLLFEAGMEGMVDAVWAVTAPAPVRLKRLMARDKLSLAEAESRLRAQGEETARLRRATRVIPTGGDLEATRASVRAAWQELQRHLADDPEPGGAPWV</sequence>
<reference key="1">
    <citation type="journal article" date="2008" name="Environ. Microbiol.">
        <title>The complete genome sequence of Moorella thermoacetica (f. Clostridium thermoaceticum).</title>
        <authorList>
            <person name="Pierce E."/>
            <person name="Xie G."/>
            <person name="Barabote R.D."/>
            <person name="Saunders E."/>
            <person name="Han C.S."/>
            <person name="Detter J.C."/>
            <person name="Richardson P."/>
            <person name="Brettin T.S."/>
            <person name="Das A."/>
            <person name="Ljungdahl L.G."/>
            <person name="Ragsdale S.W."/>
        </authorList>
    </citation>
    <scope>NUCLEOTIDE SEQUENCE [LARGE SCALE GENOMIC DNA]</scope>
    <source>
        <strain>ATCC 39073 / JCM 9320</strain>
    </source>
</reference>
<comment type="function">
    <text evidence="1">Catalyzes the phosphorylation of the 3'-hydroxyl group of dephosphocoenzyme A to form coenzyme A.</text>
</comment>
<comment type="catalytic activity">
    <reaction evidence="1">
        <text>3'-dephospho-CoA + ATP = ADP + CoA + H(+)</text>
        <dbReference type="Rhea" id="RHEA:18245"/>
        <dbReference type="ChEBI" id="CHEBI:15378"/>
        <dbReference type="ChEBI" id="CHEBI:30616"/>
        <dbReference type="ChEBI" id="CHEBI:57287"/>
        <dbReference type="ChEBI" id="CHEBI:57328"/>
        <dbReference type="ChEBI" id="CHEBI:456216"/>
        <dbReference type="EC" id="2.7.1.24"/>
    </reaction>
</comment>
<comment type="pathway">
    <text evidence="1">Cofactor biosynthesis; coenzyme A biosynthesis; CoA from (R)-pantothenate: step 5/5.</text>
</comment>
<comment type="subcellular location">
    <subcellularLocation>
        <location evidence="1">Cytoplasm</location>
    </subcellularLocation>
</comment>
<comment type="similarity">
    <text evidence="1">Belongs to the CoaE family.</text>
</comment>